<proteinExistence type="inferred from homology"/>
<feature type="initiator methionine" description="Removed" evidence="2">
    <location>
        <position position="1"/>
    </location>
</feature>
<feature type="chain" id="PRO_0000410803" description="Eisosome protein 1">
    <location>
        <begin position="2"/>
        <end position="843"/>
    </location>
</feature>
<feature type="region of interest" description="Disordered" evidence="3">
    <location>
        <begin position="1"/>
        <end position="54"/>
    </location>
</feature>
<feature type="region of interest" description="Disordered" evidence="3">
    <location>
        <begin position="120"/>
        <end position="176"/>
    </location>
</feature>
<feature type="region of interest" description="Disordered" evidence="3">
    <location>
        <begin position="717"/>
        <end position="843"/>
    </location>
</feature>
<feature type="compositionally biased region" description="Basic residues" evidence="3">
    <location>
        <begin position="33"/>
        <end position="46"/>
    </location>
</feature>
<feature type="compositionally biased region" description="Polar residues" evidence="3">
    <location>
        <begin position="127"/>
        <end position="137"/>
    </location>
</feature>
<feature type="compositionally biased region" description="Polar residues" evidence="3">
    <location>
        <begin position="163"/>
        <end position="176"/>
    </location>
</feature>
<feature type="compositionally biased region" description="Low complexity" evidence="3">
    <location>
        <begin position="752"/>
        <end position="764"/>
    </location>
</feature>
<feature type="compositionally biased region" description="Basic and acidic residues" evidence="3">
    <location>
        <begin position="781"/>
        <end position="797"/>
    </location>
</feature>
<feature type="compositionally biased region" description="Polar residues" evidence="3">
    <location>
        <begin position="798"/>
        <end position="810"/>
    </location>
</feature>
<feature type="modified residue" description="N-acetylserine" evidence="2">
    <location>
        <position position="2"/>
    </location>
</feature>
<feature type="modified residue" description="Phosphoserine" evidence="2">
    <location>
        <position position="2"/>
    </location>
</feature>
<feature type="modified residue" description="Phosphoserine" evidence="2">
    <location>
        <position position="88"/>
    </location>
</feature>
<feature type="modified residue" description="Phosphoserine" evidence="2">
    <location>
        <position position="130"/>
    </location>
</feature>
<feature type="modified residue" description="Phosphoserine" evidence="2">
    <location>
        <position position="182"/>
    </location>
</feature>
<feature type="modified residue" description="Phosphoserine" evidence="2">
    <location>
        <position position="401"/>
    </location>
</feature>
<feature type="modified residue" description="Phosphoserine" evidence="2">
    <location>
        <position position="584"/>
    </location>
</feature>
<feature type="modified residue" description="Phosphoserine" evidence="2">
    <location>
        <position position="710"/>
    </location>
</feature>
<feature type="modified residue" description="Phosphothreonine" evidence="2">
    <location>
        <position position="720"/>
    </location>
</feature>
<feature type="modified residue" description="Phosphoserine" evidence="2">
    <location>
        <position position="763"/>
    </location>
</feature>
<feature type="modified residue" description="Phosphoserine" evidence="2">
    <location>
        <position position="775"/>
    </location>
</feature>
<feature type="modified residue" description="Phosphoserine" evidence="2">
    <location>
        <position position="816"/>
    </location>
</feature>
<feature type="modified residue" description="Phosphoserine" evidence="2">
    <location>
        <position position="828"/>
    </location>
</feature>
<feature type="modified residue" description="Phosphoserine" evidence="2">
    <location>
        <position position="829"/>
    </location>
</feature>
<feature type="modified residue" description="Phosphoserine" evidence="2">
    <location>
        <position position="838"/>
    </location>
</feature>
<name>EIS1_YEAS2</name>
<keyword id="KW-0007">Acetylation</keyword>
<keyword id="KW-1003">Cell membrane</keyword>
<keyword id="KW-0472">Membrane</keyword>
<keyword id="KW-0597">Phosphoprotein</keyword>
<dbReference type="EMBL" id="ACFL01000033">
    <property type="protein sequence ID" value="EEU08463.1"/>
    <property type="molecule type" value="Genomic_DNA"/>
</dbReference>
<dbReference type="SMR" id="C7GL88"/>
<dbReference type="OrthoDB" id="24780at4893"/>
<dbReference type="Proteomes" id="UP000008073">
    <property type="component" value="Unassembled WGS sequence"/>
</dbReference>
<dbReference type="GO" id="GO:0005886">
    <property type="term" value="C:plasma membrane"/>
    <property type="evidence" value="ECO:0007669"/>
    <property type="project" value="UniProtKB-SubCell"/>
</dbReference>
<dbReference type="GO" id="GO:0070941">
    <property type="term" value="P:eisosome assembly"/>
    <property type="evidence" value="ECO:0007669"/>
    <property type="project" value="TreeGrafter"/>
</dbReference>
<dbReference type="InterPro" id="IPR024527">
    <property type="entry name" value="Eisosome1"/>
</dbReference>
<dbReference type="PANTHER" id="PTHR28298">
    <property type="entry name" value="EISOSOME PROTEIN 1"/>
    <property type="match status" value="1"/>
</dbReference>
<dbReference type="PANTHER" id="PTHR28298:SF1">
    <property type="entry name" value="EISOSOME PROTEIN 1"/>
    <property type="match status" value="1"/>
</dbReference>
<dbReference type="Pfam" id="PF12757">
    <property type="entry name" value="Eisosome1"/>
    <property type="match status" value="1"/>
</dbReference>
<accession>C7GL88</accession>
<reference key="1">
    <citation type="journal article" date="2009" name="Genome Res.">
        <title>Genome structure of a Saccharomyces cerevisiae strain widely used in bioethanol production.</title>
        <authorList>
            <person name="Argueso J.L."/>
            <person name="Carazzolle M.F."/>
            <person name="Mieczkowski P.A."/>
            <person name="Duarte F.M."/>
            <person name="Netto O.V.C."/>
            <person name="Missawa S.K."/>
            <person name="Galzerani F."/>
            <person name="Costa G.G.L."/>
            <person name="Vidal R.O."/>
            <person name="Noronha M.F."/>
            <person name="Dominska M."/>
            <person name="Andrietta M.G.S."/>
            <person name="Andrietta S.R."/>
            <person name="Cunha A.F."/>
            <person name="Gomes L.H."/>
            <person name="Tavares F.C.A."/>
            <person name="Alcarde A.R."/>
            <person name="Dietrich F.S."/>
            <person name="McCusker J.H."/>
            <person name="Petes T.D."/>
            <person name="Pereira G.A.G."/>
        </authorList>
    </citation>
    <scope>NUCLEOTIDE SEQUENCE [LARGE SCALE GENOMIC DNA]</scope>
    <source>
        <strain>JAY291</strain>
    </source>
</reference>
<gene>
    <name type="primary">EIS1</name>
    <name type="ORF">C1Q_01012</name>
</gene>
<organism>
    <name type="scientific">Saccharomyces cerevisiae (strain JAY291)</name>
    <name type="common">Baker's yeast</name>
    <dbReference type="NCBI Taxonomy" id="574961"/>
    <lineage>
        <taxon>Eukaryota</taxon>
        <taxon>Fungi</taxon>
        <taxon>Dikarya</taxon>
        <taxon>Ascomycota</taxon>
        <taxon>Saccharomycotina</taxon>
        <taxon>Saccharomycetes</taxon>
        <taxon>Saccharomycetales</taxon>
        <taxon>Saccharomycetaceae</taxon>
        <taxon>Saccharomyces</taxon>
    </lineage>
</organism>
<comment type="function">
    <text evidence="1">Required for normal formation of eisosomes, large cytoplasmic protein assemblies that localize to specialized domains on plasma membrane and mark the site of endocytosis.</text>
</comment>
<comment type="subcellular location">
    <subcellularLocation>
        <location evidence="1">Cytoplasmic granule</location>
    </subcellularLocation>
    <subcellularLocation>
        <location evidence="1">Cell membrane</location>
        <topology evidence="1">Peripheral membrane protein</topology>
        <orientation evidence="1">Cytoplasmic side</orientation>
    </subcellularLocation>
    <text evidence="1">Localizes at the eisosomes.</text>
</comment>
<comment type="similarity">
    <text evidence="4">Belongs to the EIS1 family.</text>
</comment>
<evidence type="ECO:0000250" key="1"/>
<evidence type="ECO:0000250" key="2">
    <source>
        <dbReference type="UniProtKB" id="Q05050"/>
    </source>
</evidence>
<evidence type="ECO:0000256" key="3">
    <source>
        <dbReference type="SAM" id="MobiDB-lite"/>
    </source>
</evidence>
<evidence type="ECO:0000305" key="4"/>
<protein>
    <recommendedName>
        <fullName>Eisosome protein 1</fullName>
    </recommendedName>
</protein>
<sequence>MSLISAVEDRDIHNIGKTSGGGSRTSSINSSKKSLKHGSKSLRKPKVYQTTGEPLSREALYKAKLKYGVYQSPAQSYSIGVSDAHAASDKAANLAHDNQTTVEAYKRMFIDPNATKAASKMGPKVVRNNSITSATSKTSKESQTKRKSKESPGAAASKAYSMTMETTSLSSQTNSRSYSITSASSVLSGASGSFNSTVNPKPKTLNLEKVLVGAEKKAESRIKERWEPEKTNFQYGVKTDEHGNLNQFSFSNEMMNNIMAKVDAPKAQDLQKVKKVSAEKEAKSMKFALGAANAVKDMHPGEDIDKSIALKAQKRETYLSQLTSQQVLTLARANVDRQLDIIEKSDMHRKLFTNMEYNKAAVAVAQSNHQKKTEFHNKINMGGGLFLSPEDITKIASGLISPVLGEVSERAEAQRAMDEEIAERTEAYNKSLNEWETMERSIISNDAKVLTTTANRHQTEKKTSQEKIKASFDALVARMDTKVAERETLLEDTKSKEIEFKKQMQQELKDEKARLDQDLEEWGKKCEQDITEARKEQEELLKPYHDDLANAEAEHKTLVEERDEINAEISRLQDAIVDHKRKISGYGNDLDAQKNRNIREDDKLLELGQTKESLESHLNDDVIILANKAKEQAELSTKEARLKQLEVDSLINERKSELNATEIELKKEKLNLLEAMKDVASARGDDKIDEEKVKKLIGMTSEEYLTQNKSVEKNVEDLPTQLEKIEEGDELKKEEIVGAETKNSGGDGVPVSTAAKEATETSSAVQTKEPEEKISIGNKSSGKEDANDCKSAEHSKEISVSQKAGNNKSLGVSPDSLEHTFSGFSQGSSIEDDQDAISNQEKK</sequence>